<feature type="chain" id="PRO_1000086227" description="Small ribosomal subunit protein uS13">
    <location>
        <begin position="1"/>
        <end position="121"/>
    </location>
</feature>
<feature type="region of interest" description="Disordered" evidence="2">
    <location>
        <begin position="91"/>
        <end position="121"/>
    </location>
</feature>
<feature type="compositionally biased region" description="Basic residues" evidence="2">
    <location>
        <begin position="106"/>
        <end position="121"/>
    </location>
</feature>
<protein>
    <recommendedName>
        <fullName evidence="1">Small ribosomal subunit protein uS13</fullName>
    </recommendedName>
    <alternativeName>
        <fullName evidence="3">30S ribosomal protein S13</fullName>
    </alternativeName>
</protein>
<evidence type="ECO:0000255" key="1">
    <source>
        <dbReference type="HAMAP-Rule" id="MF_01315"/>
    </source>
</evidence>
<evidence type="ECO:0000256" key="2">
    <source>
        <dbReference type="SAM" id="MobiDB-lite"/>
    </source>
</evidence>
<evidence type="ECO:0000305" key="3"/>
<accession>A7GK45</accession>
<keyword id="KW-0687">Ribonucleoprotein</keyword>
<keyword id="KW-0689">Ribosomal protein</keyword>
<keyword id="KW-0694">RNA-binding</keyword>
<keyword id="KW-0699">rRNA-binding</keyword>
<keyword id="KW-0820">tRNA-binding</keyword>
<dbReference type="EMBL" id="CP000764">
    <property type="protein sequence ID" value="ABS20503.1"/>
    <property type="molecule type" value="Genomic_DNA"/>
</dbReference>
<dbReference type="RefSeq" id="WP_000090789.1">
    <property type="nucleotide sequence ID" value="NC_009674.1"/>
</dbReference>
<dbReference type="SMR" id="A7GK45"/>
<dbReference type="STRING" id="315749.Bcer98_0129"/>
<dbReference type="GeneID" id="75083416"/>
<dbReference type="KEGG" id="bcy:Bcer98_0129"/>
<dbReference type="eggNOG" id="COG0099">
    <property type="taxonomic scope" value="Bacteria"/>
</dbReference>
<dbReference type="HOGENOM" id="CLU_103849_1_1_9"/>
<dbReference type="OrthoDB" id="9803610at2"/>
<dbReference type="Proteomes" id="UP000002300">
    <property type="component" value="Chromosome"/>
</dbReference>
<dbReference type="GO" id="GO:0005829">
    <property type="term" value="C:cytosol"/>
    <property type="evidence" value="ECO:0007669"/>
    <property type="project" value="TreeGrafter"/>
</dbReference>
<dbReference type="GO" id="GO:0015935">
    <property type="term" value="C:small ribosomal subunit"/>
    <property type="evidence" value="ECO:0007669"/>
    <property type="project" value="TreeGrafter"/>
</dbReference>
<dbReference type="GO" id="GO:0019843">
    <property type="term" value="F:rRNA binding"/>
    <property type="evidence" value="ECO:0007669"/>
    <property type="project" value="UniProtKB-UniRule"/>
</dbReference>
<dbReference type="GO" id="GO:0003735">
    <property type="term" value="F:structural constituent of ribosome"/>
    <property type="evidence" value="ECO:0007669"/>
    <property type="project" value="InterPro"/>
</dbReference>
<dbReference type="GO" id="GO:0000049">
    <property type="term" value="F:tRNA binding"/>
    <property type="evidence" value="ECO:0007669"/>
    <property type="project" value="UniProtKB-UniRule"/>
</dbReference>
<dbReference type="GO" id="GO:0006412">
    <property type="term" value="P:translation"/>
    <property type="evidence" value="ECO:0007669"/>
    <property type="project" value="UniProtKB-UniRule"/>
</dbReference>
<dbReference type="FunFam" id="1.10.8.50:FF:000001">
    <property type="entry name" value="30S ribosomal protein S13"/>
    <property type="match status" value="1"/>
</dbReference>
<dbReference type="FunFam" id="4.10.910.10:FF:000001">
    <property type="entry name" value="30S ribosomal protein S13"/>
    <property type="match status" value="1"/>
</dbReference>
<dbReference type="Gene3D" id="1.10.8.50">
    <property type="match status" value="1"/>
</dbReference>
<dbReference type="Gene3D" id="4.10.910.10">
    <property type="entry name" value="30s ribosomal protein s13, domain 2"/>
    <property type="match status" value="1"/>
</dbReference>
<dbReference type="HAMAP" id="MF_01315">
    <property type="entry name" value="Ribosomal_uS13"/>
    <property type="match status" value="1"/>
</dbReference>
<dbReference type="InterPro" id="IPR027437">
    <property type="entry name" value="Rbsml_uS13_C"/>
</dbReference>
<dbReference type="InterPro" id="IPR001892">
    <property type="entry name" value="Ribosomal_uS13"/>
</dbReference>
<dbReference type="InterPro" id="IPR010979">
    <property type="entry name" value="Ribosomal_uS13-like_H2TH"/>
</dbReference>
<dbReference type="InterPro" id="IPR019980">
    <property type="entry name" value="Ribosomal_uS13_bac-type"/>
</dbReference>
<dbReference type="InterPro" id="IPR018269">
    <property type="entry name" value="Ribosomal_uS13_CS"/>
</dbReference>
<dbReference type="NCBIfam" id="TIGR03631">
    <property type="entry name" value="uS13_bact"/>
    <property type="match status" value="1"/>
</dbReference>
<dbReference type="PANTHER" id="PTHR10871">
    <property type="entry name" value="30S RIBOSOMAL PROTEIN S13/40S RIBOSOMAL PROTEIN S18"/>
    <property type="match status" value="1"/>
</dbReference>
<dbReference type="PANTHER" id="PTHR10871:SF1">
    <property type="entry name" value="SMALL RIBOSOMAL SUBUNIT PROTEIN US13M"/>
    <property type="match status" value="1"/>
</dbReference>
<dbReference type="Pfam" id="PF00416">
    <property type="entry name" value="Ribosomal_S13"/>
    <property type="match status" value="1"/>
</dbReference>
<dbReference type="PIRSF" id="PIRSF002134">
    <property type="entry name" value="Ribosomal_S13"/>
    <property type="match status" value="1"/>
</dbReference>
<dbReference type="SUPFAM" id="SSF46946">
    <property type="entry name" value="S13-like H2TH domain"/>
    <property type="match status" value="1"/>
</dbReference>
<dbReference type="PROSITE" id="PS00646">
    <property type="entry name" value="RIBOSOMAL_S13_1"/>
    <property type="match status" value="1"/>
</dbReference>
<dbReference type="PROSITE" id="PS50159">
    <property type="entry name" value="RIBOSOMAL_S13_2"/>
    <property type="match status" value="1"/>
</dbReference>
<gene>
    <name evidence="1" type="primary">rpsM</name>
    <name type="ordered locus">Bcer98_0129</name>
</gene>
<name>RS13_BACCN</name>
<sequence length="121" mass="13805">MARIAGVDIPRDKRVVISLTYVFGIGRTTAEKILAEAGVSEETRVRDLTEDELGRIRDIIDRIKVEGDLRREVSLNIKRLMEIGSYRGLRHRRGLPVRGQNSKNNARTRKGPRRTVANKKK</sequence>
<comment type="function">
    <text evidence="1">Located at the top of the head of the 30S subunit, it contacts several helices of the 16S rRNA. In the 70S ribosome it contacts the 23S rRNA (bridge B1a) and protein L5 of the 50S subunit (bridge B1b), connecting the 2 subunits; these bridges are implicated in subunit movement. Contacts the tRNAs in the A and P-sites.</text>
</comment>
<comment type="subunit">
    <text evidence="1">Part of the 30S ribosomal subunit. Forms a loose heterodimer with protein S19. Forms two bridges to the 50S subunit in the 70S ribosome.</text>
</comment>
<comment type="similarity">
    <text evidence="1">Belongs to the universal ribosomal protein uS13 family.</text>
</comment>
<reference key="1">
    <citation type="journal article" date="2008" name="Chem. Biol. Interact.">
        <title>Extending the Bacillus cereus group genomics to putative food-borne pathogens of different toxicity.</title>
        <authorList>
            <person name="Lapidus A."/>
            <person name="Goltsman E."/>
            <person name="Auger S."/>
            <person name="Galleron N."/>
            <person name="Segurens B."/>
            <person name="Dossat C."/>
            <person name="Land M.L."/>
            <person name="Broussolle V."/>
            <person name="Brillard J."/>
            <person name="Guinebretiere M.-H."/>
            <person name="Sanchis V."/>
            <person name="Nguen-the C."/>
            <person name="Lereclus D."/>
            <person name="Richardson P."/>
            <person name="Wincker P."/>
            <person name="Weissenbach J."/>
            <person name="Ehrlich S.D."/>
            <person name="Sorokin A."/>
        </authorList>
    </citation>
    <scope>NUCLEOTIDE SEQUENCE [LARGE SCALE GENOMIC DNA]</scope>
    <source>
        <strain>DSM 22905 / CIP 110041 / 391-98 / NVH 391-98</strain>
    </source>
</reference>
<organism>
    <name type="scientific">Bacillus cytotoxicus (strain DSM 22905 / CIP 110041 / 391-98 / NVH 391-98)</name>
    <dbReference type="NCBI Taxonomy" id="315749"/>
    <lineage>
        <taxon>Bacteria</taxon>
        <taxon>Bacillati</taxon>
        <taxon>Bacillota</taxon>
        <taxon>Bacilli</taxon>
        <taxon>Bacillales</taxon>
        <taxon>Bacillaceae</taxon>
        <taxon>Bacillus</taxon>
        <taxon>Bacillus cereus group</taxon>
    </lineage>
</organism>
<proteinExistence type="inferred from homology"/>